<feature type="chain" id="PRO_0000369632" description="Ninja-family protein 1">
    <location>
        <begin position="1"/>
        <end position="315"/>
    </location>
</feature>
<feature type="region of interest" description="Disordered" evidence="1">
    <location>
        <begin position="1"/>
        <end position="28"/>
    </location>
</feature>
<feature type="region of interest" description="Disordered" evidence="1">
    <location>
        <begin position="68"/>
        <end position="142"/>
    </location>
</feature>
<feature type="region of interest" description="Disordered" evidence="1">
    <location>
        <begin position="156"/>
        <end position="237"/>
    </location>
</feature>
<feature type="compositionally biased region" description="Basic and acidic residues" evidence="1">
    <location>
        <begin position="99"/>
        <end position="108"/>
    </location>
</feature>
<feature type="compositionally biased region" description="Polar residues" evidence="1">
    <location>
        <begin position="156"/>
        <end position="166"/>
    </location>
</feature>
<feature type="compositionally biased region" description="Low complexity" evidence="1">
    <location>
        <begin position="184"/>
        <end position="197"/>
    </location>
</feature>
<feature type="compositionally biased region" description="Low complexity" evidence="1">
    <location>
        <begin position="221"/>
        <end position="234"/>
    </location>
</feature>
<accession>B1B5D3</accession>
<gene>
    <name type="primary">AFP-A1</name>
</gene>
<proteinExistence type="inferred from homology"/>
<name>NNJA1_WHEAT</name>
<comment type="subcellular location">
    <subcellularLocation>
        <location>Nucleus</location>
    </subcellularLocation>
</comment>
<comment type="similarity">
    <text evidence="2">Belongs to the Ninja family.</text>
</comment>
<organism>
    <name type="scientific">Triticum aestivum</name>
    <name type="common">Wheat</name>
    <dbReference type="NCBI Taxonomy" id="4565"/>
    <lineage>
        <taxon>Eukaryota</taxon>
        <taxon>Viridiplantae</taxon>
        <taxon>Streptophyta</taxon>
        <taxon>Embryophyta</taxon>
        <taxon>Tracheophyta</taxon>
        <taxon>Spermatophyta</taxon>
        <taxon>Magnoliopsida</taxon>
        <taxon>Liliopsida</taxon>
        <taxon>Poales</taxon>
        <taxon>Poaceae</taxon>
        <taxon>BOP clade</taxon>
        <taxon>Pooideae</taxon>
        <taxon>Triticodae</taxon>
        <taxon>Triticeae</taxon>
        <taxon>Triticinae</taxon>
        <taxon>Triticum</taxon>
    </lineage>
</organism>
<reference key="1">
    <citation type="submission" date="2007-09" db="EMBL/GenBank/DDBJ databases">
        <title>Isolation and location of three homologous ABI5-binding protein genes of wheat.</title>
        <authorList>
            <person name="Ohnishi N."/>
            <person name="Noda K."/>
        </authorList>
    </citation>
    <scope>NUCLEOTIDE SEQUENCE [GENOMIC DNA]</scope>
    <source>
        <strain>cv. Chinese Spring</strain>
    </source>
</reference>
<protein>
    <recommendedName>
        <fullName>Ninja-family protein 1</fullName>
    </recommendedName>
    <alternativeName>
        <fullName>ABI five-binding protein A1</fullName>
        <shortName>ABI5-binding protein A1</shortName>
        <shortName>TaAFP-A1</shortName>
    </alternativeName>
</protein>
<sequence>MASRDFLGRFGGEKGAASDKAGGGAGEADEVAELSLGLSLGGCFGANSGRDAKKPRLVRSSSLAAMCSLPGTSDDLAAATPPPAPLMRTSSLPTETEEERWRRREMQSLKRLQAKRKRLERRTSMNSGKSGGSSSRDDAQEPLYPSAFQLRRSVVDQGNPSSSMPEQGSGDGAEVKSTSSMEISSDNNNNASNQNKSLPPPAPSPAAGKLPNGIVKEQPPLRTLRSLTMRTTSTGDLRKSMMEDMPMVSSKVDGPNGKKIDGFLYKYRKGEEVRIVCVCHGNFLTPAEFVKHAGGGDVTNPLRHIVVNPSPSVFL</sequence>
<keyword id="KW-0539">Nucleus</keyword>
<keyword id="KW-1185">Reference proteome</keyword>
<evidence type="ECO:0000256" key="1">
    <source>
        <dbReference type="SAM" id="MobiDB-lite"/>
    </source>
</evidence>
<evidence type="ECO:0000305" key="2"/>
<dbReference type="EMBL" id="AB360911">
    <property type="protein sequence ID" value="BAG12827.1"/>
    <property type="molecule type" value="Genomic_DNA"/>
</dbReference>
<dbReference type="SMR" id="B1B5D3"/>
<dbReference type="PaxDb" id="4565-Traes_2AS_1F9C19808.1"/>
<dbReference type="eggNOG" id="ENOG502QW6K">
    <property type="taxonomic scope" value="Eukaryota"/>
</dbReference>
<dbReference type="Proteomes" id="UP000019116">
    <property type="component" value="Unplaced"/>
</dbReference>
<dbReference type="ExpressionAtlas" id="B1B5D3">
    <property type="expression patterns" value="baseline and differential"/>
</dbReference>
<dbReference type="GO" id="GO:0005634">
    <property type="term" value="C:nucleus"/>
    <property type="evidence" value="ECO:0000318"/>
    <property type="project" value="GO_Central"/>
</dbReference>
<dbReference type="GO" id="GO:0045892">
    <property type="term" value="P:negative regulation of DNA-templated transcription"/>
    <property type="evidence" value="ECO:0000318"/>
    <property type="project" value="GO_Central"/>
</dbReference>
<dbReference type="GO" id="GO:0007165">
    <property type="term" value="P:signal transduction"/>
    <property type="evidence" value="ECO:0007669"/>
    <property type="project" value="InterPro"/>
</dbReference>
<dbReference type="InterPro" id="IPR031307">
    <property type="entry name" value="Ninja_fam"/>
</dbReference>
<dbReference type="InterPro" id="IPR012463">
    <property type="entry name" value="Ninja_motif"/>
</dbReference>
<dbReference type="InterPro" id="IPR032310">
    <property type="entry name" value="NLS_NINJA_AFP-like"/>
</dbReference>
<dbReference type="InterPro" id="IPR032308">
    <property type="entry name" value="TDBD"/>
</dbReference>
<dbReference type="PANTHER" id="PTHR31413">
    <property type="entry name" value="AFP HOMOLOG 2"/>
    <property type="match status" value="1"/>
</dbReference>
<dbReference type="PANTHER" id="PTHR31413:SF31">
    <property type="entry name" value="NINJA-FAMILY PROTEIN AFP3"/>
    <property type="match status" value="1"/>
</dbReference>
<dbReference type="Pfam" id="PF07897">
    <property type="entry name" value="EAR"/>
    <property type="match status" value="1"/>
</dbReference>
<dbReference type="Pfam" id="PF16136">
    <property type="entry name" value="NLS_NINJA_AFP"/>
    <property type="match status" value="1"/>
</dbReference>
<dbReference type="Pfam" id="PF16135">
    <property type="entry name" value="TDBD"/>
    <property type="match status" value="1"/>
</dbReference>